<name>RHGA_ASPNC</name>
<proteinExistence type="inferred from homology"/>
<dbReference type="EC" id="3.2.1.171"/>
<dbReference type="EMBL" id="AM270260">
    <property type="protein sequence ID" value="CAK41025.1"/>
    <property type="molecule type" value="Genomic_DNA"/>
</dbReference>
<dbReference type="RefSeq" id="XP_001395184.1">
    <property type="nucleotide sequence ID" value="XM_001395147.1"/>
</dbReference>
<dbReference type="SMR" id="A2QYE5"/>
<dbReference type="CAZy" id="GH28">
    <property type="family name" value="Glycoside Hydrolase Family 28"/>
</dbReference>
<dbReference type="GlyCosmos" id="A2QYE5">
    <property type="glycosylation" value="6 sites, No reported glycans"/>
</dbReference>
<dbReference type="EnsemblFungi" id="CAK41025">
    <property type="protein sequence ID" value="CAK41025"/>
    <property type="gene ID" value="An12g00950"/>
</dbReference>
<dbReference type="GeneID" id="4985445"/>
<dbReference type="KEGG" id="ang:An12g00950"/>
<dbReference type="VEuPathDB" id="FungiDB:An12g00950"/>
<dbReference type="HOGENOM" id="CLU_016031_7_2_1"/>
<dbReference type="Proteomes" id="UP000006706">
    <property type="component" value="Chromosome 3L"/>
</dbReference>
<dbReference type="GO" id="GO:0005576">
    <property type="term" value="C:extracellular region"/>
    <property type="evidence" value="ECO:0007669"/>
    <property type="project" value="UniProtKB-SubCell"/>
</dbReference>
<dbReference type="GO" id="GO:0004650">
    <property type="term" value="F:polygalacturonase activity"/>
    <property type="evidence" value="ECO:0007669"/>
    <property type="project" value="InterPro"/>
</dbReference>
<dbReference type="GO" id="GO:0046576">
    <property type="term" value="F:rhamnogalacturonan alpha-L-rhamnopyranosyl-(1-&gt;4)-alpha-D-galactopyranosyluronide lyase activity"/>
    <property type="evidence" value="ECO:0000314"/>
    <property type="project" value="AspGD"/>
</dbReference>
<dbReference type="GO" id="GO:0071555">
    <property type="term" value="P:cell wall organization"/>
    <property type="evidence" value="ECO:0007669"/>
    <property type="project" value="UniProtKB-KW"/>
</dbReference>
<dbReference type="GO" id="GO:0045490">
    <property type="term" value="P:pectin catabolic process"/>
    <property type="evidence" value="ECO:0000250"/>
    <property type="project" value="UniProtKB"/>
</dbReference>
<dbReference type="FunFam" id="2.160.20.10:FF:000025">
    <property type="entry name" value="Probable rhamnogalacturonase B"/>
    <property type="match status" value="1"/>
</dbReference>
<dbReference type="Gene3D" id="2.160.20.10">
    <property type="entry name" value="Single-stranded right-handed beta-helix, Pectin lyase-like"/>
    <property type="match status" value="1"/>
</dbReference>
<dbReference type="InterPro" id="IPR000743">
    <property type="entry name" value="Glyco_hydro_28"/>
</dbReference>
<dbReference type="InterPro" id="IPR012334">
    <property type="entry name" value="Pectin_lyas_fold"/>
</dbReference>
<dbReference type="InterPro" id="IPR011050">
    <property type="entry name" value="Pectin_lyase_fold/virulence"/>
</dbReference>
<dbReference type="InterPro" id="IPR024535">
    <property type="entry name" value="RHGA/B-epi-like_pectate_lyase"/>
</dbReference>
<dbReference type="PANTHER" id="PTHR31736">
    <property type="match status" value="1"/>
</dbReference>
<dbReference type="PANTHER" id="PTHR31736:SF19">
    <property type="entry name" value="PECTIN LYASE SUPERFAMILY PROTEIN-RELATED"/>
    <property type="match status" value="1"/>
</dbReference>
<dbReference type="Pfam" id="PF00295">
    <property type="entry name" value="Glyco_hydro_28"/>
    <property type="match status" value="1"/>
</dbReference>
<dbReference type="Pfam" id="PF12708">
    <property type="entry name" value="Pect-lyase_RHGA_epim"/>
    <property type="match status" value="1"/>
</dbReference>
<dbReference type="SUPFAM" id="SSF51126">
    <property type="entry name" value="Pectin lyase-like"/>
    <property type="match status" value="1"/>
</dbReference>
<evidence type="ECO:0000250" key="1"/>
<evidence type="ECO:0000255" key="2"/>
<evidence type="ECO:0000305" key="3"/>
<gene>
    <name type="primary">rhgA</name>
    <name type="ORF">An12g00950</name>
</gene>
<keyword id="KW-0119">Carbohydrate metabolism</keyword>
<keyword id="KW-0961">Cell wall biogenesis/degradation</keyword>
<keyword id="KW-1015">Disulfide bond</keyword>
<keyword id="KW-0325">Glycoprotein</keyword>
<keyword id="KW-0326">Glycosidase</keyword>
<keyword id="KW-0378">Hydrolase</keyword>
<keyword id="KW-0624">Polysaccharide degradation</keyword>
<keyword id="KW-1185">Reference proteome</keyword>
<keyword id="KW-0964">Secreted</keyword>
<keyword id="KW-0732">Signal</keyword>
<organism>
    <name type="scientific">Aspergillus niger (strain ATCC MYA-4892 / CBS 513.88 / FGSC A1513)</name>
    <dbReference type="NCBI Taxonomy" id="425011"/>
    <lineage>
        <taxon>Eukaryota</taxon>
        <taxon>Fungi</taxon>
        <taxon>Dikarya</taxon>
        <taxon>Ascomycota</taxon>
        <taxon>Pezizomycotina</taxon>
        <taxon>Eurotiomycetes</taxon>
        <taxon>Eurotiomycetidae</taxon>
        <taxon>Eurotiales</taxon>
        <taxon>Aspergillaceae</taxon>
        <taxon>Aspergillus</taxon>
        <taxon>Aspergillus subgen. Circumdati</taxon>
    </lineage>
</organism>
<comment type="function">
    <text evidence="1">Pectinolytic enzymes consist of four classes of enzymes: pectine lyase, polygalacturonase, pectin methylesterase and rhamnogalacturonase. Hydrolyzes alpha-D-galacturonopyranosyl-(1,2)-alpha-L-rhamnopyranosyl linkages in the backbone of the hairy regions of pectins (By similarity).</text>
</comment>
<comment type="catalytic activity">
    <reaction>
        <text>Endohydrolysis of alpha-D-GalA-(1-&gt;2)-alpha-L-Rha glycosidic bond in the rhamnogalacturonan I backbone with initial inversion of anomeric configuration releasing oligosaccharides with beta-D-GalA at the reducing end.</text>
        <dbReference type="EC" id="3.2.1.171"/>
    </reaction>
</comment>
<comment type="subcellular location">
    <subcellularLocation>
        <location evidence="1">Secreted</location>
    </subcellularLocation>
</comment>
<comment type="similarity">
    <text evidence="3">Belongs to the glycosyl hydrolase 28 family.</text>
</comment>
<accession>A2QYE5</accession>
<reference key="1">
    <citation type="journal article" date="2007" name="Nat. Biotechnol.">
        <title>Genome sequencing and analysis of the versatile cell factory Aspergillus niger CBS 513.88.</title>
        <authorList>
            <person name="Pel H.J."/>
            <person name="de Winde J.H."/>
            <person name="Archer D.B."/>
            <person name="Dyer P.S."/>
            <person name="Hofmann G."/>
            <person name="Schaap P.J."/>
            <person name="Turner G."/>
            <person name="de Vries R.P."/>
            <person name="Albang R."/>
            <person name="Albermann K."/>
            <person name="Andersen M.R."/>
            <person name="Bendtsen J.D."/>
            <person name="Benen J.A.E."/>
            <person name="van den Berg M."/>
            <person name="Breestraat S."/>
            <person name="Caddick M.X."/>
            <person name="Contreras R."/>
            <person name="Cornell M."/>
            <person name="Coutinho P.M."/>
            <person name="Danchin E.G.J."/>
            <person name="Debets A.J.M."/>
            <person name="Dekker P."/>
            <person name="van Dijck P.W.M."/>
            <person name="van Dijk A."/>
            <person name="Dijkhuizen L."/>
            <person name="Driessen A.J.M."/>
            <person name="d'Enfert C."/>
            <person name="Geysens S."/>
            <person name="Goosen C."/>
            <person name="Groot G.S.P."/>
            <person name="de Groot P.W.J."/>
            <person name="Guillemette T."/>
            <person name="Henrissat B."/>
            <person name="Herweijer M."/>
            <person name="van den Hombergh J.P.T.W."/>
            <person name="van den Hondel C.A.M.J.J."/>
            <person name="van der Heijden R.T.J.M."/>
            <person name="van der Kaaij R.M."/>
            <person name="Klis F.M."/>
            <person name="Kools H.J."/>
            <person name="Kubicek C.P."/>
            <person name="van Kuyk P.A."/>
            <person name="Lauber J."/>
            <person name="Lu X."/>
            <person name="van der Maarel M.J.E.C."/>
            <person name="Meulenberg R."/>
            <person name="Menke H."/>
            <person name="Mortimer M.A."/>
            <person name="Nielsen J."/>
            <person name="Oliver S.G."/>
            <person name="Olsthoorn M."/>
            <person name="Pal K."/>
            <person name="van Peij N.N.M.E."/>
            <person name="Ram A.F.J."/>
            <person name="Rinas U."/>
            <person name="Roubos J.A."/>
            <person name="Sagt C.M.J."/>
            <person name="Schmoll M."/>
            <person name="Sun J."/>
            <person name="Ussery D."/>
            <person name="Varga J."/>
            <person name="Vervecken W."/>
            <person name="van de Vondervoort P.J.J."/>
            <person name="Wedler H."/>
            <person name="Woesten H.A.B."/>
            <person name="Zeng A.-P."/>
            <person name="van Ooyen A.J.J."/>
            <person name="Visser J."/>
            <person name="Stam H."/>
        </authorList>
    </citation>
    <scope>NUCLEOTIDE SEQUENCE [LARGE SCALE GENOMIC DNA]</scope>
    <source>
        <strain>ATCC MYA-4892 / CBS 513.88 / FGSC A1513</strain>
    </source>
</reference>
<feature type="signal peptide" evidence="2">
    <location>
        <begin position="1"/>
        <end position="18"/>
    </location>
</feature>
<feature type="chain" id="PRO_5000220678" description="Probable rhamnogalacturonase A">
    <location>
        <begin position="19"/>
        <end position="446"/>
    </location>
</feature>
<feature type="active site" description="Proton donor" evidence="1">
    <location>
        <position position="216"/>
    </location>
</feature>
<feature type="active site" evidence="1">
    <location>
        <position position="291"/>
    </location>
</feature>
<feature type="glycosylation site" description="N-linked (GlcNAc...) asparagine" evidence="2">
    <location>
        <position position="50"/>
    </location>
</feature>
<feature type="glycosylation site" description="N-linked (GlcNAc...) asparagine" evidence="2">
    <location>
        <position position="115"/>
    </location>
</feature>
<feature type="glycosylation site" description="N-linked (GlcNAc...) asparagine" evidence="2">
    <location>
        <position position="124"/>
    </location>
</feature>
<feature type="glycosylation site" description="N-linked (GlcNAc...) asparagine" evidence="2">
    <location>
        <position position="236"/>
    </location>
</feature>
<feature type="glycosylation site" description="N-linked (GlcNAc...) asparagine" evidence="2">
    <location>
        <position position="281"/>
    </location>
</feature>
<feature type="glycosylation site" description="N-linked (GlcNAc...) asparagine" evidence="2">
    <location>
        <position position="318"/>
    </location>
</feature>
<feature type="disulfide bond" evidence="1">
    <location>
        <begin position="39"/>
        <end position="65"/>
    </location>
</feature>
<feature type="disulfide bond" evidence="1">
    <location>
        <begin position="218"/>
        <end position="235"/>
    </location>
</feature>
<feature type="disulfide bond" evidence="1">
    <location>
        <begin position="341"/>
        <end position="347"/>
    </location>
</feature>
<feature type="disulfide bond" evidence="1">
    <location>
        <begin position="369"/>
        <end position="378"/>
    </location>
</feature>
<sequence length="446" mass="46957">MPALPILALALAPLLVNGQLSGSVGPLTSAHSKAATKTCNVLDYGAVADNSTDIGSALSEAWDACSDGGLIYIPPGDYAMDTWVSLSGGKATAIILDGTIYRTGTDGGNMILVENSSDFELYSNSSSGAVQGFGYVYHREGDLDGPRILRLQDVSNFAVHDIILVDAPAFHFVMDDCSDGEVYNMAIRGGNSGGLDGIDVWGSNIWVHDVEVTNKDECVTVKSPANNILVESIYCNWSGGCAMGSLGADTDITDILYRNVYTWSSNQMYMIKSNGGSGTVNNTVLENFIGHGNAYSLDVDSYWSSMTAVDGDGVQLSNITFKNWKGTEADGAERGPIKVVCSDTAPCTDITIEDFAMWTESGDEQTYTCESAYGDGFCLEDSDSTTSYTTTQTVTTAPSGYSATTMAADLTTDFGTTASIPIPTIPTSFYPGLTAISPLASAATTA</sequence>
<protein>
    <recommendedName>
        <fullName>Probable rhamnogalacturonase A</fullName>
        <shortName>RGase A</shortName>
        <shortName>RHG A</shortName>
        <ecNumber>3.2.1.171</ecNumber>
    </recommendedName>
</protein>